<keyword id="KW-0068">Autocatalytic cleavage</keyword>
<keyword id="KW-0210">Decarboxylase</keyword>
<keyword id="KW-0456">Lyase</keyword>
<keyword id="KW-0620">Polyamine biosynthesis</keyword>
<keyword id="KW-0670">Pyruvate</keyword>
<keyword id="KW-1185">Reference proteome</keyword>
<keyword id="KW-0704">Schiff base</keyword>
<keyword id="KW-0865">Zymogen</keyword>
<feature type="chain" id="PRO_0000364113" description="Arginine decarboxylase beta chain" evidence="1">
    <location>
        <begin position="1"/>
        <end position="80"/>
    </location>
</feature>
<feature type="chain" id="PRO_0000364114" description="Arginine decarboxylase alpha chain" evidence="1">
    <location>
        <begin position="81"/>
        <end position="142"/>
    </location>
</feature>
<feature type="active site" description="Schiff-base intermediate with substrate; via pyruvic acid" evidence="1">
    <location>
        <position position="81"/>
    </location>
</feature>
<feature type="active site" description="Proton acceptor; for processing activity" evidence="1">
    <location>
        <position position="86"/>
    </location>
</feature>
<feature type="active site" description="Proton donor; for catalytic activity" evidence="1">
    <location>
        <position position="101"/>
    </location>
</feature>
<feature type="site" description="Cleavage (non-hydrolytic); by autolysis" evidence="1">
    <location>
        <begin position="80"/>
        <end position="81"/>
    </location>
</feature>
<feature type="modified residue" description="Pyruvic acid (Ser); by autocatalysis" evidence="1">
    <location>
        <position position="81"/>
    </location>
</feature>
<sequence length="142" mass="16010">MAVQQNVKKGGREAGGDLIVGKHVYGNLYGVDEEKLWDEELLKDIVVEAARVANMNLVDIKTWKFTGFHGGVSVIALVLESHISIHTWPDYGYATVDVYTCGANSDPWKAFNYIVLKLKPRYYIVHYADRSSIPGYTESEKR</sequence>
<organism>
    <name type="scientific">Hyperthermus butylicus (strain DSM 5456 / JCM 9403 / PLM1-5)</name>
    <dbReference type="NCBI Taxonomy" id="415426"/>
    <lineage>
        <taxon>Archaea</taxon>
        <taxon>Thermoproteota</taxon>
        <taxon>Thermoprotei</taxon>
        <taxon>Desulfurococcales</taxon>
        <taxon>Pyrodictiaceae</taxon>
        <taxon>Hyperthermus</taxon>
    </lineage>
</organism>
<protein>
    <recommendedName>
        <fullName evidence="1">Arginine decarboxylase proenzyme</fullName>
        <shortName evidence="1">ADC</shortName>
        <shortName evidence="1">ArgDC</shortName>
        <ecNumber evidence="1">4.1.1.19</ecNumber>
    </recommendedName>
    <alternativeName>
        <fullName evidence="1">Pyruvoyl-dependent arginine decarboxylase</fullName>
    </alternativeName>
    <component>
        <recommendedName>
            <fullName evidence="1">Arginine decarboxylase beta chain</fullName>
        </recommendedName>
    </component>
    <component>
        <recommendedName>
            <fullName evidence="1">Arginine decarboxylase alpha chain</fullName>
        </recommendedName>
    </component>
</protein>
<dbReference type="EC" id="4.1.1.19" evidence="1"/>
<dbReference type="EMBL" id="CP000493">
    <property type="protein sequence ID" value="ABM81016.1"/>
    <property type="molecule type" value="Genomic_DNA"/>
</dbReference>
<dbReference type="RefSeq" id="WP_011822334.1">
    <property type="nucleotide sequence ID" value="NC_008818.1"/>
</dbReference>
<dbReference type="SMR" id="A2BM05"/>
<dbReference type="STRING" id="415426.Hbut_1182"/>
<dbReference type="EnsemblBacteria" id="ABM81016">
    <property type="protein sequence ID" value="ABM81016"/>
    <property type="gene ID" value="Hbut_1182"/>
</dbReference>
<dbReference type="GeneID" id="4782734"/>
<dbReference type="KEGG" id="hbu:Hbut_1182"/>
<dbReference type="eggNOG" id="arCOG00279">
    <property type="taxonomic scope" value="Archaea"/>
</dbReference>
<dbReference type="HOGENOM" id="CLU_125470_2_1_2"/>
<dbReference type="OrthoDB" id="114016at2157"/>
<dbReference type="UniPathway" id="UPA00186">
    <property type="reaction ID" value="UER00284"/>
</dbReference>
<dbReference type="Proteomes" id="UP000002593">
    <property type="component" value="Chromosome"/>
</dbReference>
<dbReference type="GO" id="GO:0005829">
    <property type="term" value="C:cytosol"/>
    <property type="evidence" value="ECO:0007669"/>
    <property type="project" value="TreeGrafter"/>
</dbReference>
<dbReference type="GO" id="GO:0008792">
    <property type="term" value="F:arginine decarboxylase activity"/>
    <property type="evidence" value="ECO:0007669"/>
    <property type="project" value="UniProtKB-UniRule"/>
</dbReference>
<dbReference type="GO" id="GO:0006527">
    <property type="term" value="P:arginine catabolic process"/>
    <property type="evidence" value="ECO:0007669"/>
    <property type="project" value="UniProtKB-UniRule"/>
</dbReference>
<dbReference type="GO" id="GO:0006596">
    <property type="term" value="P:polyamine biosynthetic process"/>
    <property type="evidence" value="ECO:0007669"/>
    <property type="project" value="UniProtKB-UniRule"/>
</dbReference>
<dbReference type="Gene3D" id="3.60.90.10">
    <property type="entry name" value="S-adenosylmethionine decarboxylase"/>
    <property type="match status" value="1"/>
</dbReference>
<dbReference type="HAMAP" id="MF_00464">
    <property type="entry name" value="AdoMetDC_1"/>
    <property type="match status" value="1"/>
</dbReference>
<dbReference type="HAMAP" id="MF_01298">
    <property type="entry name" value="ArgDC"/>
    <property type="match status" value="1"/>
</dbReference>
<dbReference type="InterPro" id="IPR003826">
    <property type="entry name" value="AdoMetDC_fam_prok"/>
</dbReference>
<dbReference type="InterPro" id="IPR027549">
    <property type="entry name" value="ArgDC"/>
</dbReference>
<dbReference type="InterPro" id="IPR016067">
    <property type="entry name" value="S-AdoMet_deCO2ase_core"/>
</dbReference>
<dbReference type="InterPro" id="IPR017716">
    <property type="entry name" value="S-AdoMet_deCOase_pro-enz"/>
</dbReference>
<dbReference type="NCBIfam" id="TIGR03330">
    <property type="entry name" value="SAM_DCase_Bsu"/>
    <property type="match status" value="1"/>
</dbReference>
<dbReference type="PANTHER" id="PTHR33866">
    <property type="entry name" value="S-ADENOSYLMETHIONINE DECARBOXYLASE PROENZYME"/>
    <property type="match status" value="1"/>
</dbReference>
<dbReference type="PANTHER" id="PTHR33866:SF2">
    <property type="entry name" value="S-ADENOSYLMETHIONINE DECARBOXYLASE PROENZYME"/>
    <property type="match status" value="1"/>
</dbReference>
<dbReference type="Pfam" id="PF02675">
    <property type="entry name" value="AdoMet_dc"/>
    <property type="match status" value="1"/>
</dbReference>
<dbReference type="SUPFAM" id="SSF56276">
    <property type="entry name" value="S-adenosylmethionine decarboxylase"/>
    <property type="match status" value="1"/>
</dbReference>
<comment type="function">
    <text evidence="1">Specifically catalyzes the decarboxylation of L-arginine to agmatine. Has no S-adenosylmethionine decarboxylase (AdoMetDC) activity.</text>
</comment>
<comment type="catalytic activity">
    <reaction evidence="1">
        <text>L-arginine + H(+) = agmatine + CO2</text>
        <dbReference type="Rhea" id="RHEA:17641"/>
        <dbReference type="ChEBI" id="CHEBI:15378"/>
        <dbReference type="ChEBI" id="CHEBI:16526"/>
        <dbReference type="ChEBI" id="CHEBI:32682"/>
        <dbReference type="ChEBI" id="CHEBI:58145"/>
        <dbReference type="EC" id="4.1.1.19"/>
    </reaction>
</comment>
<comment type="cofactor">
    <cofactor evidence="1">
        <name>pyruvate</name>
        <dbReference type="ChEBI" id="CHEBI:15361"/>
    </cofactor>
    <text evidence="1">Binds 1 pyruvoyl group covalently per subunit.</text>
</comment>
<comment type="pathway">
    <text evidence="1">Amine and polyamine biosynthesis; agmatine biosynthesis; agmatine from L-arginine: step 1/1.</text>
</comment>
<comment type="subunit">
    <text evidence="1">Heterooctamer of four alpha and four beta chains arranged as a tetramer of alpha/beta heterodimers.</text>
</comment>
<comment type="PTM">
    <text evidence="1">Is synthesized initially as an inactive proenzyme. Formation of the active enzyme involves a self-maturation process in which the active site pyruvoyl group is generated from an internal serine residue via an autocatalytic post-translational modification. Two non-identical subunits are generated from the proenzyme in this reaction, and the pyruvate is formed at the N-terminus of the alpha chain, which is derived from the carboxyl end of the proenzyme. The post-translation cleavage follows an unusual pathway, termed non-hydrolytic serinolysis, in which the side chain hydroxyl group of the serine supplies its oxygen atom to form the C-terminus of the beta chain, while the remainder of the serine residue undergoes an oxidative deamination to produce ammonia and the pyruvoyl group blocking the N-terminus of the alpha chain.</text>
</comment>
<comment type="similarity">
    <text evidence="1">Belongs to the prokaryotic AdoMetDC family. Type 1 subfamily.</text>
</comment>
<reference key="1">
    <citation type="journal article" date="2007" name="Archaea">
        <title>The genome of Hyperthermus butylicus: a sulfur-reducing, peptide fermenting, neutrophilic Crenarchaeote growing up to 108 degrees C.</title>
        <authorList>
            <person name="Bruegger K."/>
            <person name="Chen L."/>
            <person name="Stark M."/>
            <person name="Zibat A."/>
            <person name="Redder P."/>
            <person name="Ruepp A."/>
            <person name="Awayez M."/>
            <person name="She Q."/>
            <person name="Garrett R.A."/>
            <person name="Klenk H.-P."/>
        </authorList>
    </citation>
    <scope>NUCLEOTIDE SEQUENCE [LARGE SCALE GENOMIC DNA]</scope>
    <source>
        <strain>DSM 5456 / JCM 9403 / PLM1-5</strain>
    </source>
</reference>
<name>ARGDC_HYPBU</name>
<evidence type="ECO:0000255" key="1">
    <source>
        <dbReference type="HAMAP-Rule" id="MF_01298"/>
    </source>
</evidence>
<gene>
    <name type="ordered locus">Hbut_1182</name>
</gene>
<accession>A2BM05</accession>
<proteinExistence type="inferred from homology"/>